<gene>
    <name evidence="1" type="primary">lipA</name>
    <name type="ordered locus">TTHA0239</name>
</gene>
<reference key="1">
    <citation type="submission" date="2004-11" db="EMBL/GenBank/DDBJ databases">
        <title>Complete genome sequence of Thermus thermophilus HB8.</title>
        <authorList>
            <person name="Masui R."/>
            <person name="Kurokawa K."/>
            <person name="Nakagawa N."/>
            <person name="Tokunaga F."/>
            <person name="Koyama Y."/>
            <person name="Shibata T."/>
            <person name="Oshima T."/>
            <person name="Yokoyama S."/>
            <person name="Yasunaga T."/>
            <person name="Kuramitsu S."/>
        </authorList>
    </citation>
    <scope>NUCLEOTIDE SEQUENCE [LARGE SCALE GENOMIC DNA]</scope>
    <source>
        <strain>ATCC 27634 / DSM 579 / HB8</strain>
    </source>
</reference>
<keyword id="KW-0004">4Fe-4S</keyword>
<keyword id="KW-0963">Cytoplasm</keyword>
<keyword id="KW-0408">Iron</keyword>
<keyword id="KW-0411">Iron-sulfur</keyword>
<keyword id="KW-0479">Metal-binding</keyword>
<keyword id="KW-1185">Reference proteome</keyword>
<keyword id="KW-0949">S-adenosyl-L-methionine</keyword>
<keyword id="KW-0808">Transferase</keyword>
<protein>
    <recommendedName>
        <fullName evidence="1">Lipoyl synthase</fullName>
        <ecNumber evidence="1">2.8.1.8</ecNumber>
    </recommendedName>
    <alternativeName>
        <fullName evidence="1">Lip-syn</fullName>
        <shortName evidence="1">LS</shortName>
    </alternativeName>
    <alternativeName>
        <fullName evidence="1">Lipoate synthase</fullName>
    </alternativeName>
    <alternativeName>
        <fullName evidence="1">Lipoic acid synthase</fullName>
    </alternativeName>
    <alternativeName>
        <fullName evidence="1">Sulfur insertion protein LipA</fullName>
    </alternativeName>
</protein>
<accession>Q5SLQ4</accession>
<proteinExistence type="inferred from homology"/>
<name>LIPA_THET8</name>
<sequence>MKPKFETVELLSPTGEVVELKVVKRGLAQARPEPVDRNKPAWIKAPLPTGPRYQALKAMVRELRLHTVCQEALCPNIGECWTHGTLTVMILGDICTRACKFCAVHTGNPKGLVDPEEPRRVAEAIARMGVRYVVLTSVDRDDLPDGGASHFAATIRAIKERAPGVLVEALTPDFQGDLKAVETVLAANPEVYAQNLETVRRLTPKVRDPRAGYEQTLKVLAHAKKVRPDILTKSSLMLGLGETEEEILEAMRDLRAAGVDILTLGQYLRPTPAHLPVARYVPPEDFKRYEAWGYELGFREVFAGPLVRSSYRADRVFLEATQR</sequence>
<dbReference type="EC" id="2.8.1.8" evidence="1"/>
<dbReference type="EMBL" id="AP008226">
    <property type="protein sequence ID" value="BAD70062.1"/>
    <property type="molecule type" value="Genomic_DNA"/>
</dbReference>
<dbReference type="RefSeq" id="WP_011174105.1">
    <property type="nucleotide sequence ID" value="NC_006461.1"/>
</dbReference>
<dbReference type="RefSeq" id="YP_143505.1">
    <property type="nucleotide sequence ID" value="NC_006461.1"/>
</dbReference>
<dbReference type="SMR" id="Q5SLQ4"/>
<dbReference type="DNASU" id="3168651"/>
<dbReference type="EnsemblBacteria" id="BAD70062">
    <property type="protein sequence ID" value="BAD70062"/>
    <property type="gene ID" value="BAD70062"/>
</dbReference>
<dbReference type="GeneID" id="3168651"/>
<dbReference type="KEGG" id="ttj:TTHA0239"/>
<dbReference type="PATRIC" id="fig|300852.9.peg.239"/>
<dbReference type="eggNOG" id="COG0320">
    <property type="taxonomic scope" value="Bacteria"/>
</dbReference>
<dbReference type="HOGENOM" id="CLU_033144_2_0_0"/>
<dbReference type="PhylomeDB" id="Q5SLQ4"/>
<dbReference type="UniPathway" id="UPA00538">
    <property type="reaction ID" value="UER00593"/>
</dbReference>
<dbReference type="Proteomes" id="UP000000532">
    <property type="component" value="Chromosome"/>
</dbReference>
<dbReference type="GO" id="GO:0005737">
    <property type="term" value="C:cytoplasm"/>
    <property type="evidence" value="ECO:0007669"/>
    <property type="project" value="UniProtKB-SubCell"/>
</dbReference>
<dbReference type="GO" id="GO:0051539">
    <property type="term" value="F:4 iron, 4 sulfur cluster binding"/>
    <property type="evidence" value="ECO:0007669"/>
    <property type="project" value="UniProtKB-UniRule"/>
</dbReference>
<dbReference type="GO" id="GO:0016992">
    <property type="term" value="F:lipoate synthase activity"/>
    <property type="evidence" value="ECO:0007669"/>
    <property type="project" value="UniProtKB-UniRule"/>
</dbReference>
<dbReference type="GO" id="GO:0046872">
    <property type="term" value="F:metal ion binding"/>
    <property type="evidence" value="ECO:0007669"/>
    <property type="project" value="UniProtKB-KW"/>
</dbReference>
<dbReference type="CDD" id="cd01335">
    <property type="entry name" value="Radical_SAM"/>
    <property type="match status" value="1"/>
</dbReference>
<dbReference type="FunFam" id="3.20.20.70:FF:000040">
    <property type="entry name" value="Lipoyl synthase"/>
    <property type="match status" value="1"/>
</dbReference>
<dbReference type="Gene3D" id="3.20.20.70">
    <property type="entry name" value="Aldolase class I"/>
    <property type="match status" value="1"/>
</dbReference>
<dbReference type="HAMAP" id="MF_00206">
    <property type="entry name" value="Lipoyl_synth"/>
    <property type="match status" value="1"/>
</dbReference>
<dbReference type="InterPro" id="IPR013785">
    <property type="entry name" value="Aldolase_TIM"/>
</dbReference>
<dbReference type="InterPro" id="IPR006638">
    <property type="entry name" value="Elp3/MiaA/NifB-like_rSAM"/>
</dbReference>
<dbReference type="InterPro" id="IPR031691">
    <property type="entry name" value="LIAS_N"/>
</dbReference>
<dbReference type="InterPro" id="IPR003698">
    <property type="entry name" value="Lipoyl_synth"/>
</dbReference>
<dbReference type="InterPro" id="IPR007197">
    <property type="entry name" value="rSAM"/>
</dbReference>
<dbReference type="NCBIfam" id="TIGR00510">
    <property type="entry name" value="lipA"/>
    <property type="match status" value="1"/>
</dbReference>
<dbReference type="NCBIfam" id="NF004019">
    <property type="entry name" value="PRK05481.1"/>
    <property type="match status" value="1"/>
</dbReference>
<dbReference type="NCBIfam" id="NF009544">
    <property type="entry name" value="PRK12928.1"/>
    <property type="match status" value="1"/>
</dbReference>
<dbReference type="PANTHER" id="PTHR10949">
    <property type="entry name" value="LIPOYL SYNTHASE"/>
    <property type="match status" value="1"/>
</dbReference>
<dbReference type="PANTHER" id="PTHR10949:SF0">
    <property type="entry name" value="LIPOYL SYNTHASE, MITOCHONDRIAL"/>
    <property type="match status" value="1"/>
</dbReference>
<dbReference type="Pfam" id="PF16881">
    <property type="entry name" value="LIAS_N"/>
    <property type="match status" value="1"/>
</dbReference>
<dbReference type="Pfam" id="PF04055">
    <property type="entry name" value="Radical_SAM"/>
    <property type="match status" value="1"/>
</dbReference>
<dbReference type="PIRSF" id="PIRSF005963">
    <property type="entry name" value="Lipoyl_synth"/>
    <property type="match status" value="1"/>
</dbReference>
<dbReference type="SFLD" id="SFLDF00271">
    <property type="entry name" value="lipoyl_synthase"/>
    <property type="match status" value="1"/>
</dbReference>
<dbReference type="SFLD" id="SFLDS00029">
    <property type="entry name" value="Radical_SAM"/>
    <property type="match status" value="1"/>
</dbReference>
<dbReference type="SMART" id="SM00729">
    <property type="entry name" value="Elp3"/>
    <property type="match status" value="1"/>
</dbReference>
<dbReference type="SUPFAM" id="SSF102114">
    <property type="entry name" value="Radical SAM enzymes"/>
    <property type="match status" value="1"/>
</dbReference>
<dbReference type="PROSITE" id="PS51918">
    <property type="entry name" value="RADICAL_SAM"/>
    <property type="match status" value="1"/>
</dbReference>
<comment type="function">
    <text evidence="1">Catalyzes the radical-mediated insertion of two sulfur atoms into the C-6 and C-8 positions of the octanoyl moiety bound to the lipoyl domains of lipoate-dependent enzymes, thereby converting the octanoylated domains into lipoylated derivatives.</text>
</comment>
<comment type="catalytic activity">
    <reaction evidence="1">
        <text>[[Fe-S] cluster scaffold protein carrying a second [4Fe-4S](2+) cluster] + N(6)-octanoyl-L-lysyl-[protein] + 2 oxidized [2Fe-2S]-[ferredoxin] + 2 S-adenosyl-L-methionine + 4 H(+) = [[Fe-S] cluster scaffold protein] + N(6)-[(R)-dihydrolipoyl]-L-lysyl-[protein] + 4 Fe(3+) + 2 hydrogen sulfide + 2 5'-deoxyadenosine + 2 L-methionine + 2 reduced [2Fe-2S]-[ferredoxin]</text>
        <dbReference type="Rhea" id="RHEA:16585"/>
        <dbReference type="Rhea" id="RHEA-COMP:9928"/>
        <dbReference type="Rhea" id="RHEA-COMP:10000"/>
        <dbReference type="Rhea" id="RHEA-COMP:10001"/>
        <dbReference type="Rhea" id="RHEA-COMP:10475"/>
        <dbReference type="Rhea" id="RHEA-COMP:14568"/>
        <dbReference type="Rhea" id="RHEA-COMP:14569"/>
        <dbReference type="ChEBI" id="CHEBI:15378"/>
        <dbReference type="ChEBI" id="CHEBI:17319"/>
        <dbReference type="ChEBI" id="CHEBI:29034"/>
        <dbReference type="ChEBI" id="CHEBI:29919"/>
        <dbReference type="ChEBI" id="CHEBI:33722"/>
        <dbReference type="ChEBI" id="CHEBI:33737"/>
        <dbReference type="ChEBI" id="CHEBI:33738"/>
        <dbReference type="ChEBI" id="CHEBI:57844"/>
        <dbReference type="ChEBI" id="CHEBI:59789"/>
        <dbReference type="ChEBI" id="CHEBI:78809"/>
        <dbReference type="ChEBI" id="CHEBI:83100"/>
        <dbReference type="EC" id="2.8.1.8"/>
    </reaction>
</comment>
<comment type="cofactor">
    <cofactor evidence="1">
        <name>[4Fe-4S] cluster</name>
        <dbReference type="ChEBI" id="CHEBI:49883"/>
    </cofactor>
    <text evidence="1">Binds 2 [4Fe-4S] clusters per subunit. One cluster is coordinated with 3 cysteines and an exchangeable S-adenosyl-L-methionine.</text>
</comment>
<comment type="pathway">
    <text evidence="1">Protein modification; protein lipoylation via endogenous pathway; protein N(6)-(lipoyl)lysine from octanoyl-[acyl-carrier-protein]: step 2/2.</text>
</comment>
<comment type="subcellular location">
    <subcellularLocation>
        <location evidence="1">Cytoplasm</location>
    </subcellularLocation>
</comment>
<comment type="similarity">
    <text evidence="1">Belongs to the radical SAM superfamily. Lipoyl synthase family.</text>
</comment>
<organism>
    <name type="scientific">Thermus thermophilus (strain ATCC 27634 / DSM 579 / HB8)</name>
    <dbReference type="NCBI Taxonomy" id="300852"/>
    <lineage>
        <taxon>Bacteria</taxon>
        <taxon>Thermotogati</taxon>
        <taxon>Deinococcota</taxon>
        <taxon>Deinococci</taxon>
        <taxon>Thermales</taxon>
        <taxon>Thermaceae</taxon>
        <taxon>Thermus</taxon>
    </lineage>
</organism>
<evidence type="ECO:0000255" key="1">
    <source>
        <dbReference type="HAMAP-Rule" id="MF_00206"/>
    </source>
</evidence>
<evidence type="ECO:0000255" key="2">
    <source>
        <dbReference type="PROSITE-ProRule" id="PRU01266"/>
    </source>
</evidence>
<feature type="chain" id="PRO_0000325318" description="Lipoyl synthase">
    <location>
        <begin position="1"/>
        <end position="323"/>
    </location>
</feature>
<feature type="domain" description="Radical SAM core" evidence="2">
    <location>
        <begin position="81"/>
        <end position="299"/>
    </location>
</feature>
<feature type="binding site" evidence="1">
    <location>
        <position position="69"/>
    </location>
    <ligand>
        <name>[4Fe-4S] cluster</name>
        <dbReference type="ChEBI" id="CHEBI:49883"/>
        <label>1</label>
    </ligand>
</feature>
<feature type="binding site" evidence="1">
    <location>
        <position position="74"/>
    </location>
    <ligand>
        <name>[4Fe-4S] cluster</name>
        <dbReference type="ChEBI" id="CHEBI:49883"/>
        <label>1</label>
    </ligand>
</feature>
<feature type="binding site" evidence="1">
    <location>
        <position position="80"/>
    </location>
    <ligand>
        <name>[4Fe-4S] cluster</name>
        <dbReference type="ChEBI" id="CHEBI:49883"/>
        <label>1</label>
    </ligand>
</feature>
<feature type="binding site" evidence="1">
    <location>
        <position position="95"/>
    </location>
    <ligand>
        <name>[4Fe-4S] cluster</name>
        <dbReference type="ChEBI" id="CHEBI:49883"/>
        <label>2</label>
        <note>4Fe-4S-S-AdoMet</note>
    </ligand>
</feature>
<feature type="binding site" evidence="1">
    <location>
        <position position="99"/>
    </location>
    <ligand>
        <name>[4Fe-4S] cluster</name>
        <dbReference type="ChEBI" id="CHEBI:49883"/>
        <label>2</label>
        <note>4Fe-4S-S-AdoMet</note>
    </ligand>
</feature>
<feature type="binding site" evidence="1">
    <location>
        <position position="102"/>
    </location>
    <ligand>
        <name>[4Fe-4S] cluster</name>
        <dbReference type="ChEBI" id="CHEBI:49883"/>
        <label>2</label>
        <note>4Fe-4S-S-AdoMet</note>
    </ligand>
</feature>
<feature type="binding site" evidence="1">
    <location>
        <position position="310"/>
    </location>
    <ligand>
        <name>[4Fe-4S] cluster</name>
        <dbReference type="ChEBI" id="CHEBI:49883"/>
        <label>1</label>
    </ligand>
</feature>